<evidence type="ECO:0000255" key="1">
    <source>
        <dbReference type="HAMAP-Rule" id="MF_02071"/>
    </source>
</evidence>
<evidence type="ECO:0000256" key="2">
    <source>
        <dbReference type="SAM" id="MobiDB-lite"/>
    </source>
</evidence>
<evidence type="ECO:0000269" key="3">
    <source>
    </source>
</evidence>
<evidence type="ECO:0000269" key="4">
    <source>
    </source>
</evidence>
<evidence type="ECO:0000269" key="5">
    <source>
    </source>
</evidence>
<evidence type="ECO:0000303" key="6">
    <source>
    </source>
</evidence>
<evidence type="ECO:0000305" key="7">
    <source>
    </source>
</evidence>
<sequence>MRKQWLGICIAAGMLAACTSDDGQQQTVSVPQPAVCNGPIVEISGADPRFEPLNATANQDYQRDGKSYKIVQDPSRFSQAGLAAIYDAEPGSNLTASGEAFDPTQLTAAHPTLPIPSYARITNLANGRMIVVRINDRGPYGNDRVISLSRAAADRLNTSNNTKVRIDPIIVAQDGSLSGPGMACTTVAKQTYALPAPPDLSGGAGTSSVSGPQGDILPVSNSTLKSEDPTGAPVTSSGFLGAPTTLAPGVLEGSEPTPAPQPVVTAPSTTPATSPAMVTPQAVSQSASGNFMVQVGAVSDQARAQQYQQQLGQKFGVPGRVTQNGAVWRIQLGPFASKAEASTLQQRLQTEAQLQSFITTAQ</sequence>
<dbReference type="EC" id="4.2.2.-" evidence="1"/>
<dbReference type="EMBL" id="M18276">
    <property type="protein sequence ID" value="AAA24552.1"/>
    <property type="molecule type" value="Genomic_DNA"/>
</dbReference>
<dbReference type="EMBL" id="U82598">
    <property type="protein sequence ID" value="AAB40833.1"/>
    <property type="molecule type" value="Genomic_DNA"/>
</dbReference>
<dbReference type="EMBL" id="U00096">
    <property type="protein sequence ID" value="AAC73734.1"/>
    <property type="molecule type" value="Genomic_DNA"/>
</dbReference>
<dbReference type="EMBL" id="AP009048">
    <property type="protein sequence ID" value="BAA35276.1"/>
    <property type="molecule type" value="Genomic_DNA"/>
</dbReference>
<dbReference type="EMBL" id="M22857">
    <property type="protein sequence ID" value="AAA24572.1"/>
    <property type="molecule type" value="Genomic_DNA"/>
</dbReference>
<dbReference type="PIR" id="A28387">
    <property type="entry name" value="LPECRA"/>
</dbReference>
<dbReference type="RefSeq" id="NP_415166.1">
    <property type="nucleotide sequence ID" value="NC_000913.3"/>
</dbReference>
<dbReference type="RefSeq" id="WP_001231430.1">
    <property type="nucleotide sequence ID" value="NZ_SSZK01000037.1"/>
</dbReference>
<dbReference type="SMR" id="P10100"/>
<dbReference type="BioGRID" id="4260680">
    <property type="interactions" value="171"/>
</dbReference>
<dbReference type="BioGRID" id="849624">
    <property type="interactions" value="1"/>
</dbReference>
<dbReference type="FunCoup" id="P10100">
    <property type="interactions" value="50"/>
</dbReference>
<dbReference type="IntAct" id="P10100">
    <property type="interactions" value="1"/>
</dbReference>
<dbReference type="STRING" id="511145.b0633"/>
<dbReference type="jPOST" id="P10100"/>
<dbReference type="PaxDb" id="511145-b0633"/>
<dbReference type="EnsemblBacteria" id="AAC73734">
    <property type="protein sequence ID" value="AAC73734"/>
    <property type="gene ID" value="b0633"/>
</dbReference>
<dbReference type="GeneID" id="945241"/>
<dbReference type="KEGG" id="ecj:JW0628"/>
<dbReference type="KEGG" id="eco:b0633"/>
<dbReference type="KEGG" id="ecoc:C3026_03165"/>
<dbReference type="PATRIC" id="fig|1411691.4.peg.1635"/>
<dbReference type="EchoBASE" id="EB0847"/>
<dbReference type="eggNOG" id="COG0797">
    <property type="taxonomic scope" value="Bacteria"/>
</dbReference>
<dbReference type="HOGENOM" id="CLU_042923_3_0_6"/>
<dbReference type="InParanoid" id="P10100"/>
<dbReference type="OMA" id="PFYSDRI"/>
<dbReference type="OrthoDB" id="9779128at2"/>
<dbReference type="PhylomeDB" id="P10100"/>
<dbReference type="BioCyc" id="EcoCyc:EG10854-MONOMER"/>
<dbReference type="PRO" id="PR:P10100"/>
<dbReference type="Proteomes" id="UP000000625">
    <property type="component" value="Chromosome"/>
</dbReference>
<dbReference type="GO" id="GO:0009279">
    <property type="term" value="C:cell outer membrane"/>
    <property type="evidence" value="ECO:0000314"/>
    <property type="project" value="EcoCyc"/>
</dbReference>
<dbReference type="GO" id="GO:0005886">
    <property type="term" value="C:plasma membrane"/>
    <property type="evidence" value="ECO:0007669"/>
    <property type="project" value="UniProtKB-SubCell"/>
</dbReference>
<dbReference type="GO" id="GO:0008932">
    <property type="term" value="F:lytic endotransglycosylase activity"/>
    <property type="evidence" value="ECO:0007669"/>
    <property type="project" value="UniProtKB-UniRule"/>
</dbReference>
<dbReference type="GO" id="GO:0042834">
    <property type="term" value="F:peptidoglycan binding"/>
    <property type="evidence" value="ECO:0007669"/>
    <property type="project" value="InterPro"/>
</dbReference>
<dbReference type="GO" id="GO:0071555">
    <property type="term" value="P:cell wall organization"/>
    <property type="evidence" value="ECO:0007669"/>
    <property type="project" value="UniProtKB-KW"/>
</dbReference>
<dbReference type="GO" id="GO:0043093">
    <property type="term" value="P:FtsZ-dependent cytokinesis"/>
    <property type="evidence" value="ECO:0000316"/>
    <property type="project" value="EcoCyc"/>
</dbReference>
<dbReference type="GO" id="GO:0000270">
    <property type="term" value="P:peptidoglycan metabolic process"/>
    <property type="evidence" value="ECO:0007669"/>
    <property type="project" value="UniProtKB-UniRule"/>
</dbReference>
<dbReference type="CDD" id="cd22268">
    <property type="entry name" value="DPBB_RlpA-like"/>
    <property type="match status" value="1"/>
</dbReference>
<dbReference type="FunFam" id="2.40.40.10:FF:000003">
    <property type="entry name" value="Endolytic peptidoglycan transglycosylase RlpA"/>
    <property type="match status" value="1"/>
</dbReference>
<dbReference type="FunFam" id="3.30.70.1070:FF:000003">
    <property type="entry name" value="Endolytic peptidoglycan transglycosylase RlpA"/>
    <property type="match status" value="1"/>
</dbReference>
<dbReference type="Gene3D" id="2.40.40.10">
    <property type="entry name" value="RlpA-like domain"/>
    <property type="match status" value="1"/>
</dbReference>
<dbReference type="Gene3D" id="3.30.70.1070">
    <property type="entry name" value="Sporulation related repeat"/>
    <property type="match status" value="1"/>
</dbReference>
<dbReference type="HAMAP" id="MF_02071">
    <property type="entry name" value="RlpA"/>
    <property type="match status" value="1"/>
</dbReference>
<dbReference type="InterPro" id="IPR034718">
    <property type="entry name" value="RlpA"/>
</dbReference>
<dbReference type="InterPro" id="IPR009009">
    <property type="entry name" value="RlpA-like_DPBB"/>
</dbReference>
<dbReference type="InterPro" id="IPR036908">
    <property type="entry name" value="RlpA-like_sf"/>
</dbReference>
<dbReference type="InterPro" id="IPR012997">
    <property type="entry name" value="RplA"/>
</dbReference>
<dbReference type="InterPro" id="IPR007730">
    <property type="entry name" value="SPOR-like_dom"/>
</dbReference>
<dbReference type="InterPro" id="IPR036680">
    <property type="entry name" value="SPOR-like_sf"/>
</dbReference>
<dbReference type="NCBIfam" id="NF007953">
    <property type="entry name" value="PRK10672.1"/>
    <property type="match status" value="1"/>
</dbReference>
<dbReference type="NCBIfam" id="TIGR00413">
    <property type="entry name" value="rlpA"/>
    <property type="match status" value="1"/>
</dbReference>
<dbReference type="PANTHER" id="PTHR34183">
    <property type="entry name" value="ENDOLYTIC PEPTIDOGLYCAN TRANSGLYCOSYLASE RLPA"/>
    <property type="match status" value="1"/>
</dbReference>
<dbReference type="PANTHER" id="PTHR34183:SF1">
    <property type="entry name" value="ENDOLYTIC PEPTIDOGLYCAN TRANSGLYCOSYLASE RLPA"/>
    <property type="match status" value="1"/>
</dbReference>
<dbReference type="Pfam" id="PF03330">
    <property type="entry name" value="DPBB_1"/>
    <property type="match status" value="1"/>
</dbReference>
<dbReference type="Pfam" id="PF05036">
    <property type="entry name" value="SPOR"/>
    <property type="match status" value="1"/>
</dbReference>
<dbReference type="SUPFAM" id="SSF50685">
    <property type="entry name" value="Barwin-like endoglucanases"/>
    <property type="match status" value="1"/>
</dbReference>
<dbReference type="SUPFAM" id="SSF110997">
    <property type="entry name" value="Sporulation related repeat"/>
    <property type="match status" value="1"/>
</dbReference>
<dbReference type="PROSITE" id="PS51257">
    <property type="entry name" value="PROKAR_LIPOPROTEIN"/>
    <property type="match status" value="1"/>
</dbReference>
<dbReference type="PROSITE" id="PS51724">
    <property type="entry name" value="SPOR"/>
    <property type="match status" value="1"/>
</dbReference>
<proteinExistence type="evidence at protein level"/>
<gene>
    <name evidence="1 6" type="primary">rlpA</name>
    <name type="ordered locus">b0633</name>
    <name type="ordered locus">JW0628</name>
</gene>
<keyword id="KW-1003">Cell membrane</keyword>
<keyword id="KW-0961">Cell wall biogenesis/degradation</keyword>
<keyword id="KW-0449">Lipoprotein</keyword>
<keyword id="KW-0456">Lyase</keyword>
<keyword id="KW-0472">Membrane</keyword>
<keyword id="KW-0564">Palmitate</keyword>
<keyword id="KW-1185">Reference proteome</keyword>
<keyword id="KW-0732">Signal</keyword>
<protein>
    <recommendedName>
        <fullName evidence="1">Endolytic peptidoglycan transglycosylase RlpA</fullName>
        <ecNumber evidence="1">4.2.2.-</ecNumber>
    </recommendedName>
    <alternativeName>
        <fullName evidence="6">Rare lipoprotein A</fullName>
    </alternativeName>
</protein>
<feature type="signal peptide" evidence="1 7">
    <location>
        <begin position="1"/>
        <end position="17"/>
    </location>
</feature>
<feature type="chain" id="PRO_0000030796" description="Endolytic peptidoglycan transglycosylase RlpA" evidence="1">
    <location>
        <begin position="18"/>
        <end position="362"/>
    </location>
</feature>
<feature type="domain" description="SPOR" evidence="1">
    <location>
        <begin position="285"/>
        <end position="361"/>
    </location>
</feature>
<feature type="region of interest" description="Disordered" evidence="2">
    <location>
        <begin position="198"/>
        <end position="276"/>
    </location>
</feature>
<feature type="compositionally biased region" description="Low complexity" evidence="2">
    <location>
        <begin position="262"/>
        <end position="276"/>
    </location>
</feature>
<feature type="lipid moiety-binding region" description="N-palmitoyl cysteine" evidence="1 5">
    <location>
        <position position="18"/>
    </location>
</feature>
<feature type="lipid moiety-binding region" description="S-diacylglycerol cysteine" evidence="1 5">
    <location>
        <position position="18"/>
    </location>
</feature>
<reference key="1">
    <citation type="journal article" date="1987" name="J. Bacteriol.">
        <title>Genes encoding two lipoproteins in the leuS-dacA region of the Escherichia coli chromosome.</title>
        <authorList>
            <person name="Takase I."/>
            <person name="Ishino F."/>
            <person name="Wachi M."/>
            <person name="Kamata H."/>
            <person name="Doi M."/>
            <person name="Asoh S."/>
            <person name="Matsuzawa H."/>
            <person name="Ohta T."/>
            <person name="Matsuhashi M."/>
        </authorList>
    </citation>
    <scope>NUCLEOTIDE SEQUENCE [GENOMIC DNA]</scope>
    <scope>DIACYLGLYCEROL AT CYS-18</scope>
    <scope>PALMITOYLATION AT CYS-18</scope>
    <scope>SUBCELLULAR LOCATION</scope>
    <source>
        <strain>K12</strain>
    </source>
</reference>
<reference key="2">
    <citation type="journal article" date="1996" name="DNA Res.">
        <title>A 718-kb DNA sequence of the Escherichia coli K-12 genome corresponding to the 12.7-28.0 min region on the linkage map.</title>
        <authorList>
            <person name="Oshima T."/>
            <person name="Aiba H."/>
            <person name="Baba T."/>
            <person name="Fujita K."/>
            <person name="Hayashi K."/>
            <person name="Honjo A."/>
            <person name="Ikemoto K."/>
            <person name="Inada T."/>
            <person name="Itoh T."/>
            <person name="Kajihara M."/>
            <person name="Kanai K."/>
            <person name="Kashimoto K."/>
            <person name="Kimura S."/>
            <person name="Kitagawa M."/>
            <person name="Makino K."/>
            <person name="Masuda S."/>
            <person name="Miki T."/>
            <person name="Mizobuchi K."/>
            <person name="Mori H."/>
            <person name="Motomura K."/>
            <person name="Nakamura Y."/>
            <person name="Nashimoto H."/>
            <person name="Nishio Y."/>
            <person name="Saito N."/>
            <person name="Sampei G."/>
            <person name="Seki Y."/>
            <person name="Tagami H."/>
            <person name="Takemoto K."/>
            <person name="Wada C."/>
            <person name="Yamamoto Y."/>
            <person name="Yano M."/>
            <person name="Horiuchi T."/>
        </authorList>
    </citation>
    <scope>NUCLEOTIDE SEQUENCE [LARGE SCALE GENOMIC DNA]</scope>
    <source>
        <strain>K12 / W3110 / ATCC 27325 / DSM 5911</strain>
    </source>
</reference>
<reference key="3">
    <citation type="submission" date="1997-01" db="EMBL/GenBank/DDBJ databases">
        <title>Sequence of minutes 4-25 of Escherichia coli.</title>
        <authorList>
            <person name="Chung E."/>
            <person name="Allen E."/>
            <person name="Araujo R."/>
            <person name="Aparicio A.M."/>
            <person name="Davis K."/>
            <person name="Duncan M."/>
            <person name="Federspiel N."/>
            <person name="Hyman R."/>
            <person name="Kalman S."/>
            <person name="Komp C."/>
            <person name="Kurdi O."/>
            <person name="Lew H."/>
            <person name="Lin D."/>
            <person name="Namath A."/>
            <person name="Oefner P."/>
            <person name="Roberts D."/>
            <person name="Schramm S."/>
            <person name="Davis R.W."/>
        </authorList>
    </citation>
    <scope>NUCLEOTIDE SEQUENCE [LARGE SCALE GENOMIC DNA]</scope>
    <source>
        <strain>K12 / MG1655 / ATCC 47076</strain>
    </source>
</reference>
<reference key="4">
    <citation type="journal article" date="1997" name="Science">
        <title>The complete genome sequence of Escherichia coli K-12.</title>
        <authorList>
            <person name="Blattner F.R."/>
            <person name="Plunkett G. III"/>
            <person name="Bloch C.A."/>
            <person name="Perna N.T."/>
            <person name="Burland V."/>
            <person name="Riley M."/>
            <person name="Collado-Vides J."/>
            <person name="Glasner J.D."/>
            <person name="Rode C.K."/>
            <person name="Mayhew G.F."/>
            <person name="Gregor J."/>
            <person name="Davis N.W."/>
            <person name="Kirkpatrick H.A."/>
            <person name="Goeden M.A."/>
            <person name="Rose D.J."/>
            <person name="Mau B."/>
            <person name="Shao Y."/>
        </authorList>
    </citation>
    <scope>NUCLEOTIDE SEQUENCE [LARGE SCALE GENOMIC DNA]</scope>
    <source>
        <strain>K12 / MG1655 / ATCC 47076</strain>
    </source>
</reference>
<reference key="5">
    <citation type="journal article" date="2006" name="Mol. Syst. Biol.">
        <title>Highly accurate genome sequences of Escherichia coli K-12 strains MG1655 and W3110.</title>
        <authorList>
            <person name="Hayashi K."/>
            <person name="Morooka N."/>
            <person name="Yamamoto Y."/>
            <person name="Fujita K."/>
            <person name="Isono K."/>
            <person name="Choi S."/>
            <person name="Ohtsubo E."/>
            <person name="Baba T."/>
            <person name="Wanner B.L."/>
            <person name="Mori H."/>
            <person name="Horiuchi T."/>
        </authorList>
    </citation>
    <scope>NUCLEOTIDE SEQUENCE [LARGE SCALE GENOMIC DNA]</scope>
    <source>
        <strain>K12 / W3110 / ATCC 27325 / DSM 5911</strain>
    </source>
</reference>
<reference key="6">
    <citation type="journal article" date="1989" name="J. Bacteriol.">
        <title>Nucleotide sequence of the rodA gene, responsible for the rod shape of Escherichia coli: rodA and the pbpA gene, encoding penicillin-binding protein 2, constitute the rodA operon.</title>
        <authorList>
            <person name="Matsuzawa H."/>
            <person name="Asoh S."/>
            <person name="Kunai K."/>
            <person name="Muraiso K."/>
            <person name="Takasuga A."/>
            <person name="Ohta T."/>
        </authorList>
    </citation>
    <scope>NUCLEOTIDE SEQUENCE [GENOMIC DNA] OF 1-16</scope>
    <source>
        <strain>K12</strain>
    </source>
</reference>
<reference key="7">
    <citation type="journal article" date="1997" name="Electrophoresis">
        <title>Escherichia coli proteome analysis using the gene-protein database.</title>
        <authorList>
            <person name="VanBogelen R.A."/>
            <person name="Abshire K.Z."/>
            <person name="Moldover B."/>
            <person name="Olson E.R."/>
            <person name="Neidhardt F.C."/>
        </authorList>
    </citation>
    <scope>IDENTIFICATION BY 2D-GEL</scope>
</reference>
<reference key="8">
    <citation type="journal article" date="2009" name="J. Bacteriol.">
        <title>Self-enhanced accumulation of FtsN at division sites and roles for other proteins with a SPOR domain (DamX, DedD, and RlpA) in Escherichia coli cell constriction.</title>
        <authorList>
            <person name="Gerding M.A."/>
            <person name="Liu B."/>
            <person name="Bendezu F.O."/>
            <person name="Hale C.A."/>
            <person name="Bernhardt T.G."/>
            <person name="de Boer P.A."/>
        </authorList>
    </citation>
    <scope>SUBCELLULAR LOCATION</scope>
    <scope>DISRUPTION PHENOTYPE</scope>
    <source>
        <strain>K12 / MG1655 / ATCC 47076</strain>
    </source>
</reference>
<reference key="9">
    <citation type="journal article" date="2010" name="J. Bacteriol.">
        <title>Discovery and characterization of three new Escherichia coli septal ring proteins that contain a SPOR domain: DamX, DedD, and RlpA.</title>
        <authorList>
            <person name="Arends S.J."/>
            <person name="Williams K."/>
            <person name="Scott R.J."/>
            <person name="Rolong S."/>
            <person name="Popham D.L."/>
            <person name="Weiss D.S."/>
        </authorList>
    </citation>
    <scope>SUBCELLULAR LOCATION</scope>
    <scope>DOMAIN</scope>
    <source>
        <strain>K12 / BW25113</strain>
    </source>
</reference>
<name>RLPA_ECOLI</name>
<accession>P10100</accession>
<organism>
    <name type="scientific">Escherichia coli (strain K12)</name>
    <dbReference type="NCBI Taxonomy" id="83333"/>
    <lineage>
        <taxon>Bacteria</taxon>
        <taxon>Pseudomonadati</taxon>
        <taxon>Pseudomonadota</taxon>
        <taxon>Gammaproteobacteria</taxon>
        <taxon>Enterobacterales</taxon>
        <taxon>Enterobacteriaceae</taxon>
        <taxon>Escherichia</taxon>
    </lineage>
</organism>
<comment type="function">
    <text evidence="1">Lytic transglycosylase with a strong preference for naked glycan strands that lack stem peptides.</text>
</comment>
<comment type="subcellular location">
    <subcellularLocation>
        <location evidence="1">Cell membrane</location>
        <topology evidence="1 7">Lipid-anchor</topology>
    </subcellularLocation>
    <text evidence="3 4">Localizes at the septal ring. Is also associated with some other structures/complexes along the cell cylinder.</text>
</comment>
<comment type="domain">
    <text evidence="4">The SPOR domain binds septal peptidoglycans and is required to target RlpA to the septal ring.</text>
</comment>
<comment type="disruption phenotype">
    <text evidence="3">Deletion does not result in any obvious growth or division defects.</text>
</comment>
<comment type="similarity">
    <text evidence="1">Belongs to the RlpA family.</text>
</comment>